<reference key="1">
    <citation type="journal article" date="2005" name="Science">
        <title>The transcriptional landscape of the mammalian genome.</title>
        <authorList>
            <person name="Carninci P."/>
            <person name="Kasukawa T."/>
            <person name="Katayama S."/>
            <person name="Gough J."/>
            <person name="Frith M.C."/>
            <person name="Maeda N."/>
            <person name="Oyama R."/>
            <person name="Ravasi T."/>
            <person name="Lenhard B."/>
            <person name="Wells C."/>
            <person name="Kodzius R."/>
            <person name="Shimokawa K."/>
            <person name="Bajic V.B."/>
            <person name="Brenner S.E."/>
            <person name="Batalov S."/>
            <person name="Forrest A.R."/>
            <person name="Zavolan M."/>
            <person name="Davis M.J."/>
            <person name="Wilming L.G."/>
            <person name="Aidinis V."/>
            <person name="Allen J.E."/>
            <person name="Ambesi-Impiombato A."/>
            <person name="Apweiler R."/>
            <person name="Aturaliya R.N."/>
            <person name="Bailey T.L."/>
            <person name="Bansal M."/>
            <person name="Baxter L."/>
            <person name="Beisel K.W."/>
            <person name="Bersano T."/>
            <person name="Bono H."/>
            <person name="Chalk A.M."/>
            <person name="Chiu K.P."/>
            <person name="Choudhary V."/>
            <person name="Christoffels A."/>
            <person name="Clutterbuck D.R."/>
            <person name="Crowe M.L."/>
            <person name="Dalla E."/>
            <person name="Dalrymple B.P."/>
            <person name="de Bono B."/>
            <person name="Della Gatta G."/>
            <person name="di Bernardo D."/>
            <person name="Down T."/>
            <person name="Engstrom P."/>
            <person name="Fagiolini M."/>
            <person name="Faulkner G."/>
            <person name="Fletcher C.F."/>
            <person name="Fukushima T."/>
            <person name="Furuno M."/>
            <person name="Futaki S."/>
            <person name="Gariboldi M."/>
            <person name="Georgii-Hemming P."/>
            <person name="Gingeras T.R."/>
            <person name="Gojobori T."/>
            <person name="Green R.E."/>
            <person name="Gustincich S."/>
            <person name="Harbers M."/>
            <person name="Hayashi Y."/>
            <person name="Hensch T.K."/>
            <person name="Hirokawa N."/>
            <person name="Hill D."/>
            <person name="Huminiecki L."/>
            <person name="Iacono M."/>
            <person name="Ikeo K."/>
            <person name="Iwama A."/>
            <person name="Ishikawa T."/>
            <person name="Jakt M."/>
            <person name="Kanapin A."/>
            <person name="Katoh M."/>
            <person name="Kawasawa Y."/>
            <person name="Kelso J."/>
            <person name="Kitamura H."/>
            <person name="Kitano H."/>
            <person name="Kollias G."/>
            <person name="Krishnan S.P."/>
            <person name="Kruger A."/>
            <person name="Kummerfeld S.K."/>
            <person name="Kurochkin I.V."/>
            <person name="Lareau L.F."/>
            <person name="Lazarevic D."/>
            <person name="Lipovich L."/>
            <person name="Liu J."/>
            <person name="Liuni S."/>
            <person name="McWilliam S."/>
            <person name="Madan Babu M."/>
            <person name="Madera M."/>
            <person name="Marchionni L."/>
            <person name="Matsuda H."/>
            <person name="Matsuzawa S."/>
            <person name="Miki H."/>
            <person name="Mignone F."/>
            <person name="Miyake S."/>
            <person name="Morris K."/>
            <person name="Mottagui-Tabar S."/>
            <person name="Mulder N."/>
            <person name="Nakano N."/>
            <person name="Nakauchi H."/>
            <person name="Ng P."/>
            <person name="Nilsson R."/>
            <person name="Nishiguchi S."/>
            <person name="Nishikawa S."/>
            <person name="Nori F."/>
            <person name="Ohara O."/>
            <person name="Okazaki Y."/>
            <person name="Orlando V."/>
            <person name="Pang K.C."/>
            <person name="Pavan W.J."/>
            <person name="Pavesi G."/>
            <person name="Pesole G."/>
            <person name="Petrovsky N."/>
            <person name="Piazza S."/>
            <person name="Reed J."/>
            <person name="Reid J.F."/>
            <person name="Ring B.Z."/>
            <person name="Ringwald M."/>
            <person name="Rost B."/>
            <person name="Ruan Y."/>
            <person name="Salzberg S.L."/>
            <person name="Sandelin A."/>
            <person name="Schneider C."/>
            <person name="Schoenbach C."/>
            <person name="Sekiguchi K."/>
            <person name="Semple C.A."/>
            <person name="Seno S."/>
            <person name="Sessa L."/>
            <person name="Sheng Y."/>
            <person name="Shibata Y."/>
            <person name="Shimada H."/>
            <person name="Shimada K."/>
            <person name="Silva D."/>
            <person name="Sinclair B."/>
            <person name="Sperling S."/>
            <person name="Stupka E."/>
            <person name="Sugiura K."/>
            <person name="Sultana R."/>
            <person name="Takenaka Y."/>
            <person name="Taki K."/>
            <person name="Tammoja K."/>
            <person name="Tan S.L."/>
            <person name="Tang S."/>
            <person name="Taylor M.S."/>
            <person name="Tegner J."/>
            <person name="Teichmann S.A."/>
            <person name="Ueda H.R."/>
            <person name="van Nimwegen E."/>
            <person name="Verardo R."/>
            <person name="Wei C.L."/>
            <person name="Yagi K."/>
            <person name="Yamanishi H."/>
            <person name="Zabarovsky E."/>
            <person name="Zhu S."/>
            <person name="Zimmer A."/>
            <person name="Hide W."/>
            <person name="Bult C."/>
            <person name="Grimmond S.M."/>
            <person name="Teasdale R.D."/>
            <person name="Liu E.T."/>
            <person name="Brusic V."/>
            <person name="Quackenbush J."/>
            <person name="Wahlestedt C."/>
            <person name="Mattick J.S."/>
            <person name="Hume D.A."/>
            <person name="Kai C."/>
            <person name="Sasaki D."/>
            <person name="Tomaru Y."/>
            <person name="Fukuda S."/>
            <person name="Kanamori-Katayama M."/>
            <person name="Suzuki M."/>
            <person name="Aoki J."/>
            <person name="Arakawa T."/>
            <person name="Iida J."/>
            <person name="Imamura K."/>
            <person name="Itoh M."/>
            <person name="Kato T."/>
            <person name="Kawaji H."/>
            <person name="Kawagashira N."/>
            <person name="Kawashima T."/>
            <person name="Kojima M."/>
            <person name="Kondo S."/>
            <person name="Konno H."/>
            <person name="Nakano K."/>
            <person name="Ninomiya N."/>
            <person name="Nishio T."/>
            <person name="Okada M."/>
            <person name="Plessy C."/>
            <person name="Shibata K."/>
            <person name="Shiraki T."/>
            <person name="Suzuki S."/>
            <person name="Tagami M."/>
            <person name="Waki K."/>
            <person name="Watahiki A."/>
            <person name="Okamura-Oho Y."/>
            <person name="Suzuki H."/>
            <person name="Kawai J."/>
            <person name="Hayashizaki Y."/>
        </authorList>
    </citation>
    <scope>NUCLEOTIDE SEQUENCE [LARGE SCALE MRNA] (ISOFORMS 1 AND 2)</scope>
    <source>
        <strain>C57BL/6J</strain>
        <tissue>Bone marrow</tissue>
        <tissue>Mammary gland</tissue>
        <tissue>Skin</tissue>
        <tissue>Testis</tissue>
    </source>
</reference>
<reference key="2">
    <citation type="journal article" date="2004" name="Genome Res.">
        <title>The status, quality, and expansion of the NIH full-length cDNA project: the Mammalian Gene Collection (MGC).</title>
        <authorList>
            <consortium name="The MGC Project Team"/>
        </authorList>
    </citation>
    <scope>NUCLEOTIDE SEQUENCE [LARGE SCALE MRNA] (ISOFORM 1)</scope>
    <source>
        <strain>C57BL/6J</strain>
        <tissue>Egg</tissue>
    </source>
</reference>
<reference key="3">
    <citation type="journal article" date="2010" name="Cell">
        <title>A tissue-specific atlas of mouse protein phosphorylation and expression.</title>
        <authorList>
            <person name="Huttlin E.L."/>
            <person name="Jedrychowski M.P."/>
            <person name="Elias J.E."/>
            <person name="Goswami T."/>
            <person name="Rad R."/>
            <person name="Beausoleil S.A."/>
            <person name="Villen J."/>
            <person name="Haas W."/>
            <person name="Sowa M.E."/>
            <person name="Gygi S.P."/>
        </authorList>
    </citation>
    <scope>IDENTIFICATION BY MASS SPECTROMETRY [LARGE SCALE ANALYSIS]</scope>
    <source>
        <tissue>Brain</tissue>
        <tissue>Brown adipose tissue</tissue>
        <tissue>Heart</tissue>
        <tissue>Kidney</tissue>
        <tissue>Liver</tissue>
        <tissue>Lung</tissue>
        <tissue>Pancreas</tissue>
        <tissue>Spleen</tissue>
        <tissue>Testis</tissue>
    </source>
</reference>
<reference key="4">
    <citation type="journal article" date="2011" name="J. Biol. Chem.">
        <title>Ethylmalonyl-CoA decarboxylase, a new enzyme involved in metabolite proofreading.</title>
        <authorList>
            <person name="Linster C.L."/>
            <person name="Noel G."/>
            <person name="Stroobant V."/>
            <person name="Vertommen D."/>
            <person name="Vincent M.F."/>
            <person name="Bommer G.T."/>
            <person name="Veiga-da-Cunha M."/>
            <person name="Van Schaftingen E."/>
        </authorList>
    </citation>
    <scope>FUNCTION</scope>
    <scope>CATALYTIC ACTIVITY</scope>
    <scope>SUBCELLULAR LOCATION</scope>
    <scope>BIOPHYSICOCHEMICAL PROPERTIES</scope>
</reference>
<reference key="5">
    <citation type="journal article" date="2013" name="Mol. Cell">
        <title>SIRT5-mediated lysine desuccinylation impacts diverse metabolic pathways.</title>
        <authorList>
            <person name="Park J."/>
            <person name="Chen Y."/>
            <person name="Tishkoff D.X."/>
            <person name="Peng C."/>
            <person name="Tan M."/>
            <person name="Dai L."/>
            <person name="Xie Z."/>
            <person name="Zhang Y."/>
            <person name="Zwaans B.M."/>
            <person name="Skinner M.E."/>
            <person name="Lombard D.B."/>
            <person name="Zhao Y."/>
        </authorList>
    </citation>
    <scope>SUCCINYLATION [LARGE SCALE ANALYSIS] AT LYS-232 AND LYS-316</scope>
    <scope>IDENTIFICATION BY MASS SPECTROMETRY [LARGE SCALE ANALYSIS]</scope>
    <source>
        <tissue>Liver</tissue>
    </source>
</reference>
<reference key="6">
    <citation type="journal article" date="2013" name="Proc. Natl. Acad. Sci. U.S.A.">
        <title>Label-free quantitative proteomics of the lysine acetylome in mitochondria identifies substrates of SIRT3 in metabolic pathways.</title>
        <authorList>
            <person name="Rardin M.J."/>
            <person name="Newman J.C."/>
            <person name="Held J.M."/>
            <person name="Cusack M.P."/>
            <person name="Sorensen D.J."/>
            <person name="Li B."/>
            <person name="Schilling B."/>
            <person name="Mooney S.D."/>
            <person name="Kahn C.R."/>
            <person name="Verdin E."/>
            <person name="Gibson B.W."/>
        </authorList>
    </citation>
    <scope>ACETYLATION [LARGE SCALE ANALYSIS] AT LYS-232</scope>
    <scope>IDENTIFICATION BY MASS SPECTROMETRY [LARGE SCALE ANALYSIS]</scope>
    <source>
        <tissue>Liver</tissue>
    </source>
</reference>
<keyword id="KW-0007">Acetylation</keyword>
<keyword id="KW-0025">Alternative splicing</keyword>
<keyword id="KW-0963">Cytoplasm</keyword>
<keyword id="KW-0456">Lyase</keyword>
<keyword id="KW-1185">Reference proteome</keyword>
<comment type="function">
    <text evidence="1">Decarboxylates ethylmalonyl-CoA, a potentially toxic metabolite, to form butyryl-CoA, suggesting it might be involved in metabolite proofreading. Acts preferentially on (S)-ethylmalonyl-CoA but also has some activity on the (R)-isomer. Also has methylmalonyl-CoA decarboxylase activity at lower level.</text>
</comment>
<comment type="catalytic activity">
    <reaction evidence="1">
        <text>(2S)-ethylmalonyl-CoA + H(+) = butanoyl-CoA + CO2</text>
        <dbReference type="Rhea" id="RHEA:32131"/>
        <dbReference type="ChEBI" id="CHEBI:15378"/>
        <dbReference type="ChEBI" id="CHEBI:16526"/>
        <dbReference type="ChEBI" id="CHEBI:57371"/>
        <dbReference type="ChEBI" id="CHEBI:60909"/>
        <dbReference type="EC" id="4.1.1.94"/>
    </reaction>
    <physiologicalReaction direction="left-to-right" evidence="4">
        <dbReference type="Rhea" id="RHEA:32132"/>
    </physiologicalReaction>
</comment>
<comment type="catalytic activity">
    <reaction evidence="1">
        <text>(S)-methylmalonyl-CoA + H(+) = propanoyl-CoA + CO2</text>
        <dbReference type="Rhea" id="RHEA:61340"/>
        <dbReference type="ChEBI" id="CHEBI:15378"/>
        <dbReference type="ChEBI" id="CHEBI:16526"/>
        <dbReference type="ChEBI" id="CHEBI:57327"/>
        <dbReference type="ChEBI" id="CHEBI:57392"/>
        <dbReference type="EC" id="4.1.1.94"/>
    </reaction>
    <physiologicalReaction direction="left-to-right" evidence="4">
        <dbReference type="Rhea" id="RHEA:61341"/>
    </physiologicalReaction>
</comment>
<comment type="catalytic activity">
    <reaction evidence="1">
        <text>(2R)-ethylmalonyl-CoA + H(+) = butanoyl-CoA + CO2</text>
        <dbReference type="Rhea" id="RHEA:59540"/>
        <dbReference type="ChEBI" id="CHEBI:15378"/>
        <dbReference type="ChEBI" id="CHEBI:16526"/>
        <dbReference type="ChEBI" id="CHEBI:57371"/>
        <dbReference type="ChEBI" id="CHEBI:85316"/>
        <dbReference type="EC" id="4.1.1.94"/>
    </reaction>
    <physiologicalReaction direction="left-to-right" evidence="4">
        <dbReference type="Rhea" id="RHEA:59541"/>
    </physiologicalReaction>
</comment>
<comment type="biophysicochemical properties">
    <kinetics>
        <KM evidence="1">0.96 uM for (S)-ethylmalonyl-CoA (in absence of ATP)</KM>
        <KM evidence="1">6.5 uM for (S)-ethylmalonyl-CoA (in presence of 5 mM ATP)</KM>
        <KM evidence="1">3.1 uM for (S)-methylmalonyl-CoA (in absence of ATP)</KM>
        <KM evidence="1">15.1 uM for (S)-methylmalonyl-CoA (in presence of 5 mM ATP)</KM>
        <text evidence="1">kcat is 10 sec(-1) with (S)-ethylmalonyl-CoA as substrate (in presence of 5 mM ATP). kcat is 1.68 sec(-1) with (S)-methylmalonyl-CoA as substrate (in presence of 5 mM ATP).</text>
    </kinetics>
</comment>
<comment type="subcellular location">
    <subcellularLocation>
        <location evidence="4">Cytoplasm</location>
        <location evidence="4">Cytosol</location>
    </subcellularLocation>
</comment>
<comment type="alternative products">
    <event type="alternative splicing"/>
    <isoform>
        <id>Q9D9V3-1</id>
        <name>1</name>
        <sequence type="displayed"/>
    </isoform>
    <isoform>
        <id>Q9D9V3-2</id>
        <name>2</name>
        <sequence type="described" ref="VSP_022499"/>
    </isoform>
</comment>
<comment type="similarity">
    <text evidence="3">Belongs to the enoyl-CoA hydratase/isomerase family.</text>
</comment>
<accession>Q9D9V3</accession>
<accession>Q3U8C0</accession>
<accession>Q3UM30</accession>
<accession>Q8C185</accession>
<accession>Q9CTC5</accession>
<dbReference type="EC" id="4.1.1.94" evidence="1"/>
<dbReference type="EMBL" id="AK003965">
    <property type="protein sequence ID" value="BAB23096.1"/>
    <property type="molecule type" value="mRNA"/>
</dbReference>
<dbReference type="EMBL" id="AK006444">
    <property type="protein sequence ID" value="BAB24592.2"/>
    <property type="molecule type" value="mRNA"/>
</dbReference>
<dbReference type="EMBL" id="AK028775">
    <property type="protein sequence ID" value="BAC26112.1"/>
    <property type="molecule type" value="mRNA"/>
</dbReference>
<dbReference type="EMBL" id="AK145162">
    <property type="protein sequence ID" value="BAE26268.1"/>
    <property type="molecule type" value="mRNA"/>
</dbReference>
<dbReference type="EMBL" id="AK150932">
    <property type="protein sequence ID" value="BAE29969.1"/>
    <property type="molecule type" value="mRNA"/>
</dbReference>
<dbReference type="EMBL" id="AK152285">
    <property type="protein sequence ID" value="BAE31098.1"/>
    <property type="molecule type" value="mRNA"/>
</dbReference>
<dbReference type="EMBL" id="AK153454">
    <property type="protein sequence ID" value="BAE32007.1"/>
    <property type="molecule type" value="mRNA"/>
</dbReference>
<dbReference type="EMBL" id="AK166589">
    <property type="protein sequence ID" value="BAE38876.1"/>
    <property type="molecule type" value="mRNA"/>
</dbReference>
<dbReference type="EMBL" id="AK166634">
    <property type="protein sequence ID" value="BAE38907.1"/>
    <property type="molecule type" value="mRNA"/>
</dbReference>
<dbReference type="EMBL" id="AK166660">
    <property type="protein sequence ID" value="BAE38924.1"/>
    <property type="molecule type" value="mRNA"/>
</dbReference>
<dbReference type="EMBL" id="BC066183">
    <property type="protein sequence ID" value="AAH66183.1"/>
    <property type="molecule type" value="mRNA"/>
</dbReference>
<dbReference type="CCDS" id="CCDS23760.1">
    <molecule id="Q9D9V3-1"/>
</dbReference>
<dbReference type="CCDS" id="CCDS48528.1">
    <molecule id="Q9D9V3-2"/>
</dbReference>
<dbReference type="RefSeq" id="NP_001103665.1">
    <molecule id="Q9D9V3-2"/>
    <property type="nucleotide sequence ID" value="NM_001110195.1"/>
</dbReference>
<dbReference type="RefSeq" id="NP_080131.4">
    <molecule id="Q9D9V3-1"/>
    <property type="nucleotide sequence ID" value="NM_025855.4"/>
</dbReference>
<dbReference type="SMR" id="Q9D9V3"/>
<dbReference type="BioGRID" id="206721">
    <property type="interactions" value="12"/>
</dbReference>
<dbReference type="FunCoup" id="Q9D9V3">
    <property type="interactions" value="955"/>
</dbReference>
<dbReference type="IntAct" id="Q9D9V3">
    <property type="interactions" value="1"/>
</dbReference>
<dbReference type="STRING" id="10090.ENSMUSP00000020034"/>
<dbReference type="GlyGen" id="Q9D9V3">
    <property type="glycosylation" value="1 site, 1 O-linked glycan (1 site)"/>
</dbReference>
<dbReference type="iPTMnet" id="Q9D9V3"/>
<dbReference type="PhosphoSitePlus" id="Q9D9V3"/>
<dbReference type="SwissPalm" id="Q9D9V3"/>
<dbReference type="jPOST" id="Q9D9V3"/>
<dbReference type="PaxDb" id="10090-ENSMUSP00000020034"/>
<dbReference type="PeptideAtlas" id="Q9D9V3"/>
<dbReference type="ProteomicsDB" id="275431">
    <molecule id="Q9D9V3-1"/>
</dbReference>
<dbReference type="ProteomicsDB" id="275432">
    <molecule id="Q9D9V3-2"/>
</dbReference>
<dbReference type="Pumba" id="Q9D9V3"/>
<dbReference type="Antibodypedia" id="32755">
    <property type="antibodies" value="128 antibodies from 20 providers"/>
</dbReference>
<dbReference type="Ensembl" id="ENSMUST00000020034.6">
    <molecule id="Q9D9V3-1"/>
    <property type="protein sequence ID" value="ENSMUSP00000020034.5"/>
    <property type="gene ID" value="ENSMUSG00000019883.12"/>
</dbReference>
<dbReference type="Ensembl" id="ENSMUST00000160399.8">
    <molecule id="Q9D9V3-2"/>
    <property type="protein sequence ID" value="ENSMUSP00000125553.2"/>
    <property type="gene ID" value="ENSMUSG00000019883.12"/>
</dbReference>
<dbReference type="GeneID" id="52665"/>
<dbReference type="KEGG" id="mmu:52665"/>
<dbReference type="UCSC" id="uc007esw.2">
    <molecule id="Q9D9V3-1"/>
    <property type="organism name" value="mouse"/>
</dbReference>
<dbReference type="AGR" id="MGI:1277169"/>
<dbReference type="CTD" id="55862"/>
<dbReference type="MGI" id="MGI:1277169">
    <property type="gene designation" value="Echdc1"/>
</dbReference>
<dbReference type="VEuPathDB" id="HostDB:ENSMUSG00000019883"/>
<dbReference type="eggNOG" id="KOG1680">
    <property type="taxonomic scope" value="Eukaryota"/>
</dbReference>
<dbReference type="GeneTree" id="ENSGT00880000138038"/>
<dbReference type="HOGENOM" id="CLU_009834_7_6_1"/>
<dbReference type="InParanoid" id="Q9D9V3"/>
<dbReference type="OMA" id="FTICRPE"/>
<dbReference type="OrthoDB" id="448450at2759"/>
<dbReference type="PhylomeDB" id="Q9D9V3"/>
<dbReference type="TreeFam" id="TF315986"/>
<dbReference type="BioCyc" id="MetaCyc:MONOMER-17103"/>
<dbReference type="BRENDA" id="4.1.1.94">
    <property type="organism ID" value="3474"/>
</dbReference>
<dbReference type="SABIO-RK" id="Q9D9V3"/>
<dbReference type="BioGRID-ORCS" id="52665">
    <property type="hits" value="2 hits in 79 CRISPR screens"/>
</dbReference>
<dbReference type="ChiTaRS" id="Echdc1">
    <property type="organism name" value="mouse"/>
</dbReference>
<dbReference type="PRO" id="PR:Q9D9V3"/>
<dbReference type="Proteomes" id="UP000000589">
    <property type="component" value="Chromosome 10"/>
</dbReference>
<dbReference type="RNAct" id="Q9D9V3">
    <property type="molecule type" value="protein"/>
</dbReference>
<dbReference type="Bgee" id="ENSMUSG00000019883">
    <property type="expression patterns" value="Expressed in aorta tunica adventitia and 257 other cell types or tissues"/>
</dbReference>
<dbReference type="ExpressionAtlas" id="Q9D9V3">
    <property type="expression patterns" value="baseline and differential"/>
</dbReference>
<dbReference type="GO" id="GO:0005829">
    <property type="term" value="C:cytosol"/>
    <property type="evidence" value="ECO:0000314"/>
    <property type="project" value="UniProtKB"/>
</dbReference>
<dbReference type="GO" id="GO:0016831">
    <property type="term" value="F:carboxy-lyase activity"/>
    <property type="evidence" value="ECO:0000314"/>
    <property type="project" value="UniProtKB"/>
</dbReference>
<dbReference type="GO" id="GO:0004492">
    <property type="term" value="F:methyl/ethyl malonyl-CoA decarboxylase activity"/>
    <property type="evidence" value="ECO:0007669"/>
    <property type="project" value="UniProtKB-EC"/>
</dbReference>
<dbReference type="CDD" id="cd06558">
    <property type="entry name" value="crotonase-like"/>
    <property type="match status" value="1"/>
</dbReference>
<dbReference type="FunFam" id="3.90.226.10:FF:000040">
    <property type="entry name" value="Ethylmalonyl-CoA decarboxylase 1"/>
    <property type="match status" value="1"/>
</dbReference>
<dbReference type="Gene3D" id="3.90.226.10">
    <property type="entry name" value="2-enoyl-CoA Hydratase, Chain A, domain 1"/>
    <property type="match status" value="1"/>
</dbReference>
<dbReference type="InterPro" id="IPR029045">
    <property type="entry name" value="ClpP/crotonase-like_dom_sf"/>
</dbReference>
<dbReference type="InterPro" id="IPR018376">
    <property type="entry name" value="Enoyl-CoA_hyd/isom_CS"/>
</dbReference>
<dbReference type="InterPro" id="IPR001753">
    <property type="entry name" value="Enoyl-CoA_hydra/iso"/>
</dbReference>
<dbReference type="PANTHER" id="PTHR11941">
    <property type="entry name" value="ENOYL-COA HYDRATASE-RELATED"/>
    <property type="match status" value="1"/>
</dbReference>
<dbReference type="PANTHER" id="PTHR11941:SF27">
    <property type="entry name" value="ETHYLMALONYL-COA DECARBOXYLASE"/>
    <property type="match status" value="1"/>
</dbReference>
<dbReference type="Pfam" id="PF00378">
    <property type="entry name" value="ECH_1"/>
    <property type="match status" value="1"/>
</dbReference>
<dbReference type="SUPFAM" id="SSF52096">
    <property type="entry name" value="ClpP/crotonase"/>
    <property type="match status" value="1"/>
</dbReference>
<dbReference type="PROSITE" id="PS00166">
    <property type="entry name" value="ENOYL_COA_HYDRATASE"/>
    <property type="match status" value="1"/>
</dbReference>
<organism>
    <name type="scientific">Mus musculus</name>
    <name type="common">Mouse</name>
    <dbReference type="NCBI Taxonomy" id="10090"/>
    <lineage>
        <taxon>Eukaryota</taxon>
        <taxon>Metazoa</taxon>
        <taxon>Chordata</taxon>
        <taxon>Craniata</taxon>
        <taxon>Vertebrata</taxon>
        <taxon>Euteleostomi</taxon>
        <taxon>Mammalia</taxon>
        <taxon>Eutheria</taxon>
        <taxon>Euarchontoglires</taxon>
        <taxon>Glires</taxon>
        <taxon>Rodentia</taxon>
        <taxon>Myomorpha</taxon>
        <taxon>Muroidea</taxon>
        <taxon>Muridae</taxon>
        <taxon>Murinae</taxon>
        <taxon>Mus</taxon>
        <taxon>Mus</taxon>
    </lineage>
</organism>
<name>ECHD1_MOUSE</name>
<sequence>MRRCEVNSKPISEYFGIPCENREMAKCLLTSSLSVRTKLLQTGVSLYNTSHGFHEEEVKKILEQFPGGSIDLLKKQNGIGILTLNNPNKMNAFSGVMMLQLLERVIELENWTEGKGLIIHGAKNTFCSGSDLNAVKALSTPESGVALSMFMQNTLTRFMRLPLISVALVQGWAMGGGAELTTACDFRLMTEESVIRFVHKEMGIVPSWGGTSRLVEIIGSRQALKVLSGTLKLDSKEALNIGLTDEVLQPSDETTALEQAQEWLEKFVSGPPQVIRGLKKSVCSARELYIEEALQNERDVLETLWGGPANLEAIAKKGKHTK</sequence>
<proteinExistence type="evidence at protein level"/>
<protein>
    <recommendedName>
        <fullName>Ethylmalonyl-CoA decarboxylase</fullName>
        <ecNumber evidence="1">4.1.1.94</ecNumber>
    </recommendedName>
    <alternativeName>
        <fullName>Enoyl-CoA hydratase domain-containing protein 1</fullName>
    </alternativeName>
    <alternativeName>
        <fullName>Methylmalonyl-CoA decarboxylase</fullName>
        <shortName>MMCD</shortName>
    </alternativeName>
</protein>
<gene>
    <name type="primary">Echdc1</name>
</gene>
<feature type="chain" id="PRO_0000273247" description="Ethylmalonyl-CoA decarboxylase">
    <location>
        <begin position="1"/>
        <end position="322"/>
    </location>
</feature>
<feature type="modified residue" description="N6-acetyllysine; alternate" evidence="5">
    <location>
        <position position="232"/>
    </location>
</feature>
<feature type="modified residue" description="N6-succinyllysine; alternate" evidence="6">
    <location>
        <position position="232"/>
    </location>
</feature>
<feature type="modified residue" description="N6-succinyllysine" evidence="6">
    <location>
        <position position="316"/>
    </location>
</feature>
<feature type="splice variant" id="VSP_022499" description="In isoform 2." evidence="2">
    <location>
        <begin position="1"/>
        <end position="23"/>
    </location>
</feature>
<feature type="sequence conflict" description="In Ref. 1; BAC26112." evidence="3" ref="1">
    <original>R</original>
    <variation>K</variation>
    <location>
        <position position="2"/>
    </location>
</feature>
<feature type="sequence conflict" description="In Ref. 1; BAE26268." evidence="3" ref="1">
    <original>C</original>
    <variation>F</variation>
    <location>
        <position position="4"/>
    </location>
</feature>
<feature type="sequence conflict" description="In Ref. 1; BAC26112." evidence="3" ref="1">
    <original>R</original>
    <variation>Q</variation>
    <location>
        <position position="22"/>
    </location>
</feature>
<feature type="sequence conflict" description="In Ref. 1; BAE26268." evidence="3" ref="1">
    <original>K</original>
    <variation>Q</variation>
    <location>
        <position position="280"/>
    </location>
</feature>
<evidence type="ECO:0000269" key="1">
    <source>
    </source>
</evidence>
<evidence type="ECO:0000303" key="2">
    <source>
    </source>
</evidence>
<evidence type="ECO:0000305" key="3"/>
<evidence type="ECO:0000305" key="4">
    <source>
    </source>
</evidence>
<evidence type="ECO:0007744" key="5">
    <source>
    </source>
</evidence>
<evidence type="ECO:0007744" key="6">
    <source>
    </source>
</evidence>